<gene>
    <name evidence="1" type="primary">atpG</name>
    <name type="ordered locus">RHOS4_08840</name>
    <name type="ORF">RSP_2298</name>
</gene>
<organism>
    <name type="scientific">Cereibacter sphaeroides (strain ATCC 17023 / DSM 158 / JCM 6121 / CCUG 31486 / LMG 2827 / NBRC 12203 / NCIMB 8253 / ATH 2.4.1.)</name>
    <name type="common">Rhodobacter sphaeroides</name>
    <dbReference type="NCBI Taxonomy" id="272943"/>
    <lineage>
        <taxon>Bacteria</taxon>
        <taxon>Pseudomonadati</taxon>
        <taxon>Pseudomonadota</taxon>
        <taxon>Alphaproteobacteria</taxon>
        <taxon>Rhodobacterales</taxon>
        <taxon>Paracoccaceae</taxon>
        <taxon>Cereibacter</taxon>
    </lineage>
</organism>
<sequence>MPSLKDLKNRIGSVKNTRKITKAMQMVAAAKLRRAQEAAEAARPFAERMTAVMTGLAGSVGSSESAPRLLAGTGSDKVHLLVVMTAERGLCGGFNSSIVRLARAHAAKLLTQGKTVKILTVGKKGREQLRRDLGQHFIGHVDLSEVKRMGYPVAQGIARDLLDRFDKGEFDVATIFFARFQSVINQVPTAQQVIPAVFEGEGEVSSLYDYEPSEEGVLADLLPRGVATQIFTALLENGASEQGARMSAMDNATRNAGDMINRLTIEYNRSRQAAITKELIEIISGAEAL</sequence>
<keyword id="KW-0066">ATP synthesis</keyword>
<keyword id="KW-0997">Cell inner membrane</keyword>
<keyword id="KW-1003">Cell membrane</keyword>
<keyword id="KW-0139">CF(1)</keyword>
<keyword id="KW-0375">Hydrogen ion transport</keyword>
<keyword id="KW-0406">Ion transport</keyword>
<keyword id="KW-0472">Membrane</keyword>
<keyword id="KW-1185">Reference proteome</keyword>
<keyword id="KW-0813">Transport</keyword>
<name>ATPG_CERS4</name>
<feature type="chain" id="PRO_1000053310" description="ATP synthase gamma chain">
    <location>
        <begin position="1"/>
        <end position="289"/>
    </location>
</feature>
<comment type="function">
    <text evidence="1">Produces ATP from ADP in the presence of a proton gradient across the membrane. The gamma chain is believed to be important in regulating ATPase activity and the flow of protons through the CF(0) complex.</text>
</comment>
<comment type="subunit">
    <text evidence="1">F-type ATPases have 2 components, CF(1) - the catalytic core - and CF(0) - the membrane proton channel. CF(1) has five subunits: alpha(3), beta(3), gamma(1), delta(1), epsilon(1). CF(0) has three main subunits: a, b and c.</text>
</comment>
<comment type="subcellular location">
    <subcellularLocation>
        <location evidence="1">Cell inner membrane</location>
        <topology evidence="1">Peripheral membrane protein</topology>
    </subcellularLocation>
</comment>
<comment type="similarity">
    <text evidence="1">Belongs to the ATPase gamma chain family.</text>
</comment>
<dbReference type="EMBL" id="CP000143">
    <property type="protein sequence ID" value="ABA78452.1"/>
    <property type="molecule type" value="Genomic_DNA"/>
</dbReference>
<dbReference type="RefSeq" id="WP_011337386.1">
    <property type="nucleotide sequence ID" value="NC_007493.2"/>
</dbReference>
<dbReference type="RefSeq" id="YP_352353.1">
    <property type="nucleotide sequence ID" value="NC_007493.2"/>
</dbReference>
<dbReference type="SMR" id="Q3J432"/>
<dbReference type="STRING" id="272943.RSP_2298"/>
<dbReference type="EnsemblBacteria" id="ABA78452">
    <property type="protein sequence ID" value="ABA78452"/>
    <property type="gene ID" value="RSP_2298"/>
</dbReference>
<dbReference type="GeneID" id="3719829"/>
<dbReference type="KEGG" id="rsp:RSP_2298"/>
<dbReference type="PATRIC" id="fig|272943.9.peg.1209"/>
<dbReference type="eggNOG" id="COG0224">
    <property type="taxonomic scope" value="Bacteria"/>
</dbReference>
<dbReference type="OrthoDB" id="9812769at2"/>
<dbReference type="PhylomeDB" id="Q3J432"/>
<dbReference type="Proteomes" id="UP000002703">
    <property type="component" value="Chromosome 1"/>
</dbReference>
<dbReference type="GO" id="GO:0005886">
    <property type="term" value="C:plasma membrane"/>
    <property type="evidence" value="ECO:0007669"/>
    <property type="project" value="UniProtKB-SubCell"/>
</dbReference>
<dbReference type="GO" id="GO:0045259">
    <property type="term" value="C:proton-transporting ATP synthase complex"/>
    <property type="evidence" value="ECO:0007669"/>
    <property type="project" value="UniProtKB-KW"/>
</dbReference>
<dbReference type="GO" id="GO:0005524">
    <property type="term" value="F:ATP binding"/>
    <property type="evidence" value="ECO:0007669"/>
    <property type="project" value="UniProtKB-UniRule"/>
</dbReference>
<dbReference type="GO" id="GO:0046933">
    <property type="term" value="F:proton-transporting ATP synthase activity, rotational mechanism"/>
    <property type="evidence" value="ECO:0007669"/>
    <property type="project" value="UniProtKB-UniRule"/>
</dbReference>
<dbReference type="GO" id="GO:0042777">
    <property type="term" value="P:proton motive force-driven plasma membrane ATP synthesis"/>
    <property type="evidence" value="ECO:0007669"/>
    <property type="project" value="UniProtKB-UniRule"/>
</dbReference>
<dbReference type="CDD" id="cd12151">
    <property type="entry name" value="F1-ATPase_gamma"/>
    <property type="match status" value="1"/>
</dbReference>
<dbReference type="FunFam" id="1.10.287.80:FF:000001">
    <property type="entry name" value="ATP synthase gamma chain"/>
    <property type="match status" value="1"/>
</dbReference>
<dbReference type="FunFam" id="1.10.287.80:FF:000003">
    <property type="entry name" value="ATP synthase gamma chain, chloroplastic"/>
    <property type="match status" value="1"/>
</dbReference>
<dbReference type="Gene3D" id="3.40.1380.10">
    <property type="match status" value="1"/>
</dbReference>
<dbReference type="Gene3D" id="1.10.287.80">
    <property type="entry name" value="ATP synthase, gamma subunit, helix hairpin domain"/>
    <property type="match status" value="1"/>
</dbReference>
<dbReference type="HAMAP" id="MF_00815">
    <property type="entry name" value="ATP_synth_gamma_bact"/>
    <property type="match status" value="1"/>
</dbReference>
<dbReference type="InterPro" id="IPR035968">
    <property type="entry name" value="ATP_synth_F1_ATPase_gsu"/>
</dbReference>
<dbReference type="InterPro" id="IPR000131">
    <property type="entry name" value="ATP_synth_F1_gsu"/>
</dbReference>
<dbReference type="InterPro" id="IPR023632">
    <property type="entry name" value="ATP_synth_F1_gsu_CS"/>
</dbReference>
<dbReference type="NCBIfam" id="TIGR01146">
    <property type="entry name" value="ATPsyn_F1gamma"/>
    <property type="match status" value="1"/>
</dbReference>
<dbReference type="NCBIfam" id="NF004146">
    <property type="entry name" value="PRK05621.1-4"/>
    <property type="match status" value="1"/>
</dbReference>
<dbReference type="PANTHER" id="PTHR11693">
    <property type="entry name" value="ATP SYNTHASE GAMMA CHAIN"/>
    <property type="match status" value="1"/>
</dbReference>
<dbReference type="PANTHER" id="PTHR11693:SF22">
    <property type="entry name" value="ATP SYNTHASE SUBUNIT GAMMA, MITOCHONDRIAL"/>
    <property type="match status" value="1"/>
</dbReference>
<dbReference type="Pfam" id="PF00231">
    <property type="entry name" value="ATP-synt"/>
    <property type="match status" value="1"/>
</dbReference>
<dbReference type="PIRSF" id="PIRSF039089">
    <property type="entry name" value="ATP_synthase_gamma"/>
    <property type="match status" value="1"/>
</dbReference>
<dbReference type="PRINTS" id="PR00126">
    <property type="entry name" value="ATPASEGAMMA"/>
</dbReference>
<dbReference type="SUPFAM" id="SSF52943">
    <property type="entry name" value="ATP synthase (F1-ATPase), gamma subunit"/>
    <property type="match status" value="1"/>
</dbReference>
<dbReference type="PROSITE" id="PS00153">
    <property type="entry name" value="ATPASE_GAMMA"/>
    <property type="match status" value="1"/>
</dbReference>
<evidence type="ECO:0000255" key="1">
    <source>
        <dbReference type="HAMAP-Rule" id="MF_00815"/>
    </source>
</evidence>
<proteinExistence type="inferred from homology"/>
<protein>
    <recommendedName>
        <fullName evidence="1">ATP synthase gamma chain</fullName>
    </recommendedName>
    <alternativeName>
        <fullName evidence="1">ATP synthase F1 sector gamma subunit</fullName>
    </alternativeName>
    <alternativeName>
        <fullName evidence="1">F-ATPase gamma subunit</fullName>
    </alternativeName>
</protein>
<reference key="1">
    <citation type="submission" date="2005-09" db="EMBL/GenBank/DDBJ databases">
        <title>Complete sequence of chromosome 1 of Rhodobacter sphaeroides 2.4.1.</title>
        <authorList>
            <person name="Copeland A."/>
            <person name="Lucas S."/>
            <person name="Lapidus A."/>
            <person name="Barry K."/>
            <person name="Detter J.C."/>
            <person name="Glavina T."/>
            <person name="Hammon N."/>
            <person name="Israni S."/>
            <person name="Pitluck S."/>
            <person name="Richardson P."/>
            <person name="Mackenzie C."/>
            <person name="Choudhary M."/>
            <person name="Larimer F."/>
            <person name="Hauser L.J."/>
            <person name="Land M."/>
            <person name="Donohue T.J."/>
            <person name="Kaplan S."/>
        </authorList>
    </citation>
    <scope>NUCLEOTIDE SEQUENCE [LARGE SCALE GENOMIC DNA]</scope>
    <source>
        <strain>ATCC 17023 / DSM 158 / JCM 6121 / CCUG 31486 / LMG 2827 / NBRC 12203 / NCIMB 8253 / ATH 2.4.1.</strain>
    </source>
</reference>
<accession>Q3J432</accession>